<comment type="function">
    <text evidence="1 2 3 5">Involved in DNA double-strand break (DSB) repair (PubMed:22135300). Probably acts with NurA to stimulate resection of the 5' strand and produce the long 3' single-strand that is required for RadA loading (By similarity). NurA and HerA together stimulate the end-resection of six nucleotides of a linear DNA substrate (PubMed:26560692). Has DNA-dependent ATPase activity and bidirectional DNA helicase activity (PubMed:22135300, PubMed:25420454, PubMed:26560692). Preferentially binds single stranded (ss)DNA, bubble and semiforked DNA substrate over other DNA molecules tested (PubMed:26560692). Stimulates the exo- but not endonuclease activity of NurA (PubMed:26560692).</text>
</comment>
<comment type="catalytic activity">
    <reaction evidence="2 3 5">
        <text>Couples ATP hydrolysis with the unwinding of duplex DNA at the replication fork by translocating in the 5'-3' direction. This creates two antiparallel DNA single strands (ssDNA). The leading ssDNA polymer is the template for DNA polymerase III holoenzyme which synthesizes a continuous strand.</text>
        <dbReference type="EC" id="5.6.2.3"/>
    </reaction>
</comment>
<comment type="catalytic activity">
    <reaction evidence="2 3">
        <text>ATP + H2O = ADP + phosphate + H(+)</text>
        <dbReference type="Rhea" id="RHEA:13065"/>
        <dbReference type="ChEBI" id="CHEBI:15377"/>
        <dbReference type="ChEBI" id="CHEBI:15378"/>
        <dbReference type="ChEBI" id="CHEBI:30616"/>
        <dbReference type="ChEBI" id="CHEBI:43474"/>
        <dbReference type="ChEBI" id="CHEBI:456216"/>
        <dbReference type="EC" id="5.6.2.3"/>
    </reaction>
</comment>
<comment type="catalytic activity">
    <reaction evidence="2">
        <text>Couples ATP hydrolysis with the unwinding of duplex DNA by translocating in the 3'-5' direction.</text>
        <dbReference type="EC" id="5.6.2.4"/>
    </reaction>
</comment>
<comment type="catalytic activity">
    <reaction evidence="2">
        <text>ATP + H2O = ADP + phosphate + H(+)</text>
        <dbReference type="Rhea" id="RHEA:13065"/>
        <dbReference type="ChEBI" id="CHEBI:15377"/>
        <dbReference type="ChEBI" id="CHEBI:15378"/>
        <dbReference type="ChEBI" id="CHEBI:30616"/>
        <dbReference type="ChEBI" id="CHEBI:43474"/>
        <dbReference type="ChEBI" id="CHEBI:456216"/>
        <dbReference type="EC" id="5.6.2.4"/>
    </reaction>
</comment>
<comment type="activity regulation">
    <text evidence="2 5">ATPase activity is stimulated in the presence of linear double-stranded (ds)DNA (PubMed:22135300). Helicase activity requires the presence of NurA (PubMed:22135300, PubMed:26560692). LhrC-Core (Hel112) inhibits the exonuclease activity of the HerA-NurA complex on ss- and dsDNA, has no effect on the nicking activity of NurA (PubMed:29488113).</text>
</comment>
<comment type="subunit">
    <text evidence="2 3 4 5">Homohexamer (PubMed:22135300, PubMed:25420454, PubMed:25447518, PubMed:26560692). Forms a complex with NurA (PubMed:22135300, PubMed:25447518, PubMed:26560692).</text>
</comment>
<comment type="interaction">
    <interactant intactId="EBI-10110451">
        <id>Q97WG8</id>
    </interactant>
    <interactant intactId="EBI-10110462">
        <id>Q97WH1</id>
        <label>nurA</label>
    </interactant>
    <organismsDiffer>false</organismsDiffer>
    <experiments>3</experiments>
</comment>
<comment type="domain">
    <text evidence="3">Contains an N-terminal HAS-barrel domain, which mediates interaction with NurA, followed by a central RecA-like catalytic core and a C-terminal four-helix bundle.</text>
</comment>
<comment type="similarity">
    <text evidence="7">Belongs to the HerA family.</text>
</comment>
<protein>
    <recommendedName>
        <fullName evidence="7">DNA double-strand break repair helicase HerA</fullName>
        <ecNumber evidence="2 3">5.6.2.3</ecNumber>
        <ecNumber evidence="2">5.6.2.4</ecNumber>
    </recommendedName>
    <alternativeName>
        <fullName evidence="7">Bidirectional DNA 3'-5' and 5'-3' helicase HerA</fullName>
    </alternativeName>
</protein>
<dbReference type="EC" id="5.6.2.3" evidence="2 3"/>
<dbReference type="EC" id="5.6.2.4" evidence="2"/>
<dbReference type="EMBL" id="AE006641">
    <property type="protein sequence ID" value="AAK42419.1"/>
    <property type="molecule type" value="Genomic_DNA"/>
</dbReference>
<dbReference type="PIR" id="D90395">
    <property type="entry name" value="D90395"/>
</dbReference>
<dbReference type="RefSeq" id="WP_009991539.1">
    <property type="nucleotide sequence ID" value="NC_002754.1"/>
</dbReference>
<dbReference type="PDB" id="4D2I">
    <property type="method" value="X-ray"/>
    <property type="resolution" value="2.84 A"/>
    <property type="chains" value="A/B=1-500"/>
</dbReference>
<dbReference type="PDBsum" id="4D2I"/>
<dbReference type="EMDB" id="EMD-2808"/>
<dbReference type="SMR" id="Q97WG8"/>
<dbReference type="IntAct" id="Q97WG8">
    <property type="interactions" value="1"/>
</dbReference>
<dbReference type="MINT" id="Q97WG8"/>
<dbReference type="STRING" id="273057.SSO2251"/>
<dbReference type="PaxDb" id="273057-SSO2251"/>
<dbReference type="EnsemblBacteria" id="AAK42419">
    <property type="protein sequence ID" value="AAK42419"/>
    <property type="gene ID" value="SSO2251"/>
</dbReference>
<dbReference type="GeneID" id="44127985"/>
<dbReference type="KEGG" id="sso:SSO2251"/>
<dbReference type="PATRIC" id="fig|273057.12.peg.2346"/>
<dbReference type="eggNOG" id="arCOG00280">
    <property type="taxonomic scope" value="Archaea"/>
</dbReference>
<dbReference type="HOGENOM" id="CLU_023842_2_0_2"/>
<dbReference type="InParanoid" id="Q97WG8"/>
<dbReference type="PhylomeDB" id="Q97WG8"/>
<dbReference type="EvolutionaryTrace" id="Q97WG8"/>
<dbReference type="Proteomes" id="UP000001974">
    <property type="component" value="Chromosome"/>
</dbReference>
<dbReference type="GO" id="GO:0005524">
    <property type="term" value="F:ATP binding"/>
    <property type="evidence" value="ECO:0007669"/>
    <property type="project" value="UniProtKB-KW"/>
</dbReference>
<dbReference type="GO" id="GO:0016887">
    <property type="term" value="F:ATP hydrolysis activity"/>
    <property type="evidence" value="ECO:0007669"/>
    <property type="project" value="RHEA"/>
</dbReference>
<dbReference type="GO" id="GO:0004386">
    <property type="term" value="F:helicase activity"/>
    <property type="evidence" value="ECO:0007669"/>
    <property type="project" value="UniProtKB-KW"/>
</dbReference>
<dbReference type="GO" id="GO:0006281">
    <property type="term" value="P:DNA repair"/>
    <property type="evidence" value="ECO:0007669"/>
    <property type="project" value="UniProtKB-KW"/>
</dbReference>
<dbReference type="Gene3D" id="3.40.50.300">
    <property type="entry name" value="P-loop containing nucleotide triphosphate hydrolases"/>
    <property type="match status" value="2"/>
</dbReference>
<dbReference type="InterPro" id="IPR053460">
    <property type="entry name" value="DSB_Repair_Helicase"/>
</dbReference>
<dbReference type="InterPro" id="IPR008571">
    <property type="entry name" value="HerA-like"/>
</dbReference>
<dbReference type="InterPro" id="IPR018538">
    <property type="entry name" value="HerA_barrel_dom"/>
</dbReference>
<dbReference type="InterPro" id="IPR002789">
    <property type="entry name" value="HerA_central"/>
</dbReference>
<dbReference type="InterPro" id="IPR027417">
    <property type="entry name" value="P-loop_NTPase"/>
</dbReference>
<dbReference type="NCBIfam" id="NF040937">
    <property type="entry name" value="HerA_Thermprot"/>
    <property type="match status" value="1"/>
</dbReference>
<dbReference type="PANTHER" id="PTHR42957">
    <property type="entry name" value="HELICASE MJ1565-RELATED"/>
    <property type="match status" value="1"/>
</dbReference>
<dbReference type="PANTHER" id="PTHR42957:SF1">
    <property type="entry name" value="HELICASE MJ1565-RELATED"/>
    <property type="match status" value="1"/>
</dbReference>
<dbReference type="Pfam" id="PF01935">
    <property type="entry name" value="DUF87"/>
    <property type="match status" value="1"/>
</dbReference>
<dbReference type="Pfam" id="PF09378">
    <property type="entry name" value="HAS-barrel"/>
    <property type="match status" value="1"/>
</dbReference>
<dbReference type="SUPFAM" id="SSF52540">
    <property type="entry name" value="P-loop containing nucleoside triphosphate hydrolases"/>
    <property type="match status" value="1"/>
</dbReference>
<gene>
    <name evidence="6" type="primary">herA</name>
    <name evidence="8" type="ordered locus">SSO2251</name>
</gene>
<organism>
    <name type="scientific">Saccharolobus solfataricus (strain ATCC 35092 / DSM 1617 / JCM 11322 / P2)</name>
    <name type="common">Sulfolobus solfataricus</name>
    <dbReference type="NCBI Taxonomy" id="273057"/>
    <lineage>
        <taxon>Archaea</taxon>
        <taxon>Thermoproteota</taxon>
        <taxon>Thermoprotei</taxon>
        <taxon>Sulfolobales</taxon>
        <taxon>Sulfolobaceae</taxon>
        <taxon>Saccharolobus</taxon>
    </lineage>
</organism>
<reference key="1">
    <citation type="journal article" date="2001" name="Proc. Natl. Acad. Sci. U.S.A.">
        <title>The complete genome of the crenarchaeon Sulfolobus solfataricus P2.</title>
        <authorList>
            <person name="She Q."/>
            <person name="Singh R.K."/>
            <person name="Confalonieri F."/>
            <person name="Zivanovic Y."/>
            <person name="Allard G."/>
            <person name="Awayez M.J."/>
            <person name="Chan-Weiher C.C.-Y."/>
            <person name="Clausen I.G."/>
            <person name="Curtis B.A."/>
            <person name="De Moors A."/>
            <person name="Erauso G."/>
            <person name="Fletcher C."/>
            <person name="Gordon P.M.K."/>
            <person name="Heikamp-de Jong I."/>
            <person name="Jeffries A.C."/>
            <person name="Kozera C.J."/>
            <person name="Medina N."/>
            <person name="Peng X."/>
            <person name="Thi-Ngoc H.P."/>
            <person name="Redder P."/>
            <person name="Schenk M.E."/>
            <person name="Theriault C."/>
            <person name="Tolstrup N."/>
            <person name="Charlebois R.L."/>
            <person name="Doolittle W.F."/>
            <person name="Duguet M."/>
            <person name="Gaasterland T."/>
            <person name="Garrett R.A."/>
            <person name="Ragan M.A."/>
            <person name="Sensen C.W."/>
            <person name="Van der Oost J."/>
        </authorList>
    </citation>
    <scope>NUCLEOTIDE SEQUENCE [LARGE SCALE GENOMIC DNA]</scope>
    <source>
        <strain>ATCC 35092 / DSM 1617 / JCM 11322 / P2</strain>
    </source>
</reference>
<reference key="2">
    <citation type="journal article" date="2012" name="Nucleic Acids Res.">
        <title>Structural and functional insights into DNA-end processing by the archaeal HerA helicase-NurA nuclease complex.</title>
        <authorList>
            <person name="Blackwood J.K."/>
            <person name="Rzechorzek N.J."/>
            <person name="Abrams A.S."/>
            <person name="Maman J.D."/>
            <person name="Pellegrini L."/>
            <person name="Robinson N.P."/>
        </authorList>
    </citation>
    <scope>FUNCTION AS A BIDIRECTIONAL HELICASE</scope>
    <scope>CATALYTIC ACTIVITY</scope>
    <scope>ACTIVITY REGULATION</scope>
    <scope>SUBUNIT</scope>
    <scope>INTERACTION WITH NURA</scope>
    <scope>MUTAGENESIS OF LYS-154</scope>
    <source>
        <strain>ATCC 35092 / DSM 1617 / JCM 11322 / P2</strain>
    </source>
</reference>
<reference key="3">
    <citation type="journal article" date="2014" name="FEBS Lett.">
        <title>Molecular architecture of the HerA-NurA DNA double-strand break resection complex.</title>
        <authorList>
            <person name="Byrne R.T."/>
            <person name="Schuller J.M."/>
            <person name="Unverdorben P."/>
            <person name="Foerster F."/>
            <person name="Hopfner K.P."/>
        </authorList>
    </citation>
    <scope>SUBUNIT</scope>
    <scope>INTERACTION WITH NURA</scope>
    <source>
        <strain>ATCC 35092 / DSM 1617 / JCM 11322 / P2</strain>
    </source>
</reference>
<reference key="4">
    <citation type="journal article" date="2015" name="PLoS ONE">
        <title>NurA Is Endowed with Endo- and Exonuclease Activities that Are Modulated by HerA: New Insight into Their Role in DNA-End Processing.</title>
        <authorList>
            <person name="De Falco M."/>
            <person name="Catalano F."/>
            <person name="Rossi M."/>
            <person name="Ciaramella M."/>
            <person name="De Felice M."/>
        </authorList>
    </citation>
    <scope>FUNCTION AS A HELICASE</scope>
    <scope>ACTIVITY REGULATION</scope>
    <scope>SUBUNIT</scope>
    <scope>DNA-BINDING</scope>
</reference>
<reference key="5">
    <citation type="journal article" date="2018" name="Extremophiles">
        <title>The Sulfolobus solfataricus RecQ-like DNA helicase Hel112 inhibits the NurA/HerA complex exonuclease activity.</title>
        <authorList>
            <person name="De Falco M."/>
            <person name="Massa F."/>
            <person name="Rossi M."/>
            <person name="De Felice M."/>
        </authorList>
    </citation>
    <scope>FUNCTION</scope>
    <scope>ACTIVITY REGULATION</scope>
    <source>
        <strain>ATCC 35092 / DSM 1617 / JCM 11322 / P2</strain>
    </source>
</reference>
<reference evidence="9" key="6">
    <citation type="journal article" date="2014" name="Nat. Commun.">
        <title>Structure of the hexameric HerA ATPase reveals a mechanism of translocation-coupled DNA-end processing in archaea.</title>
        <authorList>
            <person name="Rzechorzek N.J."/>
            <person name="Blackwood J.K."/>
            <person name="Bray S.M."/>
            <person name="Maman J.D."/>
            <person name="Pellegrini L."/>
            <person name="Robinson N.P."/>
        </authorList>
    </citation>
    <scope>X-RAY CRYSTALLOGRAPHY (2.84 ANGSTROMS) IN COMPLEX WITH ATP ANALOG</scope>
    <scope>FUNCTION</scope>
    <scope>CATALYTIC ACTIVITY</scope>
    <scope>SUBUNIT</scope>
    <scope>DOMAIN</scope>
    <scope>MUTAGENESIS OF ARG-142; LYS-154; ARG-381 AND ASP-471</scope>
</reference>
<name>HERA_SACS2</name>
<keyword id="KW-0002">3D-structure</keyword>
<keyword id="KW-0067">ATP-binding</keyword>
<keyword id="KW-0227">DNA damage</keyword>
<keyword id="KW-0234">DNA repair</keyword>
<keyword id="KW-0238">DNA-binding</keyword>
<keyword id="KW-0347">Helicase</keyword>
<keyword id="KW-0378">Hydrolase</keyword>
<keyword id="KW-0413">Isomerase</keyword>
<keyword id="KW-0547">Nucleotide-binding</keyword>
<keyword id="KW-1185">Reference proteome</keyword>
<feature type="chain" id="PRO_0000434025" description="DNA double-strand break repair helicase HerA">
    <location>
        <begin position="1"/>
        <end position="500"/>
    </location>
</feature>
<feature type="binding site" evidence="3 9">
    <location>
        <position position="142"/>
    </location>
    <ligand>
        <name>ATP</name>
        <dbReference type="ChEBI" id="CHEBI:30616"/>
    </ligand>
</feature>
<feature type="binding site" evidence="3 9">
    <location>
        <begin position="151"/>
        <end position="156"/>
    </location>
    <ligand>
        <name>ATP</name>
        <dbReference type="ChEBI" id="CHEBI:30616"/>
    </ligand>
</feature>
<feature type="binding site" evidence="3 9">
    <location>
        <begin position="459"/>
        <end position="460"/>
    </location>
    <ligand>
        <name>ATP</name>
        <dbReference type="ChEBI" id="CHEBI:30616"/>
    </ligand>
</feature>
<feature type="mutagenesis site" description="Stimulates activity of the HerA-NurA complex." evidence="3">
    <original>R</original>
    <variation>A</variation>
    <location>
        <position position="142"/>
    </location>
</feature>
<feature type="mutagenesis site" description="Lack of ATPase and helicase activities." evidence="2 3">
    <original>K</original>
    <variation>A</variation>
    <location>
        <position position="154"/>
    </location>
</feature>
<feature type="mutagenesis site" description="Severely impairs ATPase activity. Lack of helicase activity." evidence="3">
    <original>R</original>
    <variation>A</variation>
    <location>
        <position position="381"/>
    </location>
</feature>
<feature type="mutagenesis site" description="Impairs DNA translocation and destruction. Increases ATPase activity." evidence="3">
    <original>D</original>
    <variation>A</variation>
    <location>
        <position position="471"/>
    </location>
</feature>
<feature type="strand" evidence="10">
    <location>
        <begin position="2"/>
        <end position="8"/>
    </location>
</feature>
<feature type="strand" evidence="10">
    <location>
        <begin position="12"/>
        <end position="21"/>
    </location>
</feature>
<feature type="strand" evidence="10">
    <location>
        <begin position="28"/>
        <end position="33"/>
    </location>
</feature>
<feature type="strand" evidence="10">
    <location>
        <begin position="36"/>
        <end position="48"/>
    </location>
</feature>
<feature type="strand" evidence="10">
    <location>
        <begin position="50"/>
        <end position="52"/>
    </location>
</feature>
<feature type="helix" evidence="10">
    <location>
        <begin position="59"/>
        <end position="67"/>
    </location>
</feature>
<feature type="strand" evidence="10">
    <location>
        <begin position="68"/>
        <end position="70"/>
    </location>
</feature>
<feature type="strand" evidence="10">
    <location>
        <begin position="75"/>
        <end position="85"/>
    </location>
</feature>
<feature type="turn" evidence="10">
    <location>
        <begin position="86"/>
        <end position="90"/>
    </location>
</feature>
<feature type="strand" evidence="10">
    <location>
        <begin position="102"/>
        <end position="105"/>
    </location>
</feature>
<feature type="helix" evidence="10">
    <location>
        <begin position="108"/>
        <end position="115"/>
    </location>
</feature>
<feature type="turn" evidence="10">
    <location>
        <begin position="116"/>
        <end position="118"/>
    </location>
</feature>
<feature type="strand" evidence="10">
    <location>
        <begin position="121"/>
        <end position="129"/>
    </location>
</feature>
<feature type="strand" evidence="10">
    <location>
        <begin position="132"/>
        <end position="135"/>
    </location>
</feature>
<feature type="helix" evidence="10">
    <location>
        <begin position="138"/>
        <end position="142"/>
    </location>
</feature>
<feature type="strand" evidence="10">
    <location>
        <begin position="144"/>
        <end position="147"/>
    </location>
</feature>
<feature type="helix" evidence="10">
    <location>
        <begin position="154"/>
        <end position="167"/>
    </location>
</feature>
<feature type="strand" evidence="10">
    <location>
        <begin position="172"/>
        <end position="179"/>
    </location>
</feature>
<feature type="turn" evidence="10">
    <location>
        <begin position="180"/>
        <end position="183"/>
    </location>
</feature>
<feature type="strand" evidence="10">
    <location>
        <begin position="189"/>
        <end position="192"/>
    </location>
</feature>
<feature type="helix" evidence="10">
    <location>
        <begin position="198"/>
        <end position="200"/>
    </location>
</feature>
<feature type="helix" evidence="10">
    <location>
        <begin position="203"/>
        <end position="209"/>
    </location>
</feature>
<feature type="helix" evidence="10">
    <location>
        <begin position="217"/>
        <end position="240"/>
    </location>
</feature>
<feature type="helix" evidence="10">
    <location>
        <begin position="245"/>
        <end position="247"/>
    </location>
</feature>
<feature type="helix" evidence="10">
    <location>
        <begin position="249"/>
        <end position="259"/>
    </location>
</feature>
<feature type="helix" evidence="10">
    <location>
        <begin position="274"/>
        <end position="286"/>
    </location>
</feature>
<feature type="turn" evidence="10">
    <location>
        <begin position="287"/>
        <end position="290"/>
    </location>
</feature>
<feature type="strand" evidence="10">
    <location>
        <begin position="293"/>
        <end position="295"/>
    </location>
</feature>
<feature type="helix" evidence="10">
    <location>
        <begin position="298"/>
        <end position="301"/>
    </location>
</feature>
<feature type="strand" evidence="10">
    <location>
        <begin position="306"/>
        <end position="311"/>
    </location>
</feature>
<feature type="helix" evidence="10">
    <location>
        <begin position="317"/>
        <end position="341"/>
    </location>
</feature>
<feature type="strand" evidence="10">
    <location>
        <begin position="342"/>
        <end position="345"/>
    </location>
</feature>
<feature type="strand" evidence="10">
    <location>
        <begin position="350"/>
        <end position="354"/>
    </location>
</feature>
<feature type="helix" evidence="10">
    <location>
        <begin position="357"/>
        <end position="360"/>
    </location>
</feature>
<feature type="strand" evidence="10">
    <location>
        <begin position="363"/>
        <end position="365"/>
    </location>
</feature>
<feature type="helix" evidence="10">
    <location>
        <begin position="368"/>
        <end position="379"/>
    </location>
</feature>
<feature type="helix" evidence="10">
    <location>
        <begin position="380"/>
        <end position="383"/>
    </location>
</feature>
<feature type="strand" evidence="10">
    <location>
        <begin position="385"/>
        <end position="392"/>
    </location>
</feature>
<feature type="helix" evidence="10">
    <location>
        <begin position="394"/>
        <end position="396"/>
    </location>
</feature>
<feature type="helix" evidence="10">
    <location>
        <begin position="399"/>
        <end position="402"/>
    </location>
</feature>
<feature type="strand" evidence="10">
    <location>
        <begin position="407"/>
        <end position="410"/>
    </location>
</feature>
<feature type="helix" evidence="10">
    <location>
        <begin position="416"/>
        <end position="423"/>
    </location>
</feature>
<feature type="helix" evidence="10">
    <location>
        <begin position="431"/>
        <end position="434"/>
    </location>
</feature>
<feature type="helix" evidence="10">
    <location>
        <begin position="435"/>
        <end position="439"/>
    </location>
</feature>
<feature type="strand" evidence="10">
    <location>
        <begin position="444"/>
        <end position="449"/>
    </location>
</feature>
<feature type="strand" evidence="10">
    <location>
        <begin position="452"/>
        <end position="454"/>
    </location>
</feature>
<feature type="strand" evidence="10">
    <location>
        <begin position="456"/>
        <end position="460"/>
    </location>
</feature>
<accession>Q97WG8</accession>
<proteinExistence type="evidence at protein level"/>
<evidence type="ECO:0000250" key="1">
    <source>
        <dbReference type="UniProtKB" id="Q8U1P0"/>
    </source>
</evidence>
<evidence type="ECO:0000269" key="2">
    <source>
    </source>
</evidence>
<evidence type="ECO:0000269" key="3">
    <source>
    </source>
</evidence>
<evidence type="ECO:0000269" key="4">
    <source>
    </source>
</evidence>
<evidence type="ECO:0000269" key="5">
    <source>
    </source>
</evidence>
<evidence type="ECO:0000303" key="6">
    <source>
    </source>
</evidence>
<evidence type="ECO:0000305" key="7"/>
<evidence type="ECO:0000312" key="8">
    <source>
        <dbReference type="EMBL" id="AAK42419.1"/>
    </source>
</evidence>
<evidence type="ECO:0007744" key="9">
    <source>
        <dbReference type="PDB" id="4D2I"/>
    </source>
</evidence>
<evidence type="ECO:0007829" key="10">
    <source>
        <dbReference type="PDB" id="4D2I"/>
    </source>
</evidence>
<sequence length="500" mass="56329">MIIGYVIGQATTQEALILAERPVRLGTYVVLEYDNVKALGLITNVTRGSPMLDDNMNDIEIVQRLKQFNNSIPVYTKAKVKMLCDMNNHFLMPDIPPFAGTPAREAEDEELKSIYSQDGQIRIGSLIGKNVEVKLNINSFARHLAILAATGSGKSNTVAVLSQRISELGGSVLIFDYHGEYYDSDIKNLNRIEPKLNPLYMTPREFSTLLEIRENAIIQYRILRRAFIKVTNGIREKLKEGQIPFSTLNSQFYELMKDELETQGNSDKKSSAKDEVLNKFEEFMDRYSNVIDLTSSDIIEKVKRGKVNVVSLTQLDEDSMDAVVSHYLRRILDSRKDFKRSKNSGLKFPIIAVIEEAHVFLSKNENTLTKYWASRIAREGRKFGVGLTIVSQRPKGLDENILSQMTNKIILKIIEPTDKKYILESSDNLSEDLAEQLSSLDVGEAIIIGKIVKLPAVVKIDMFEGKLLGSDPDMIGEWKKVEESEKIAKGFADFGTEIGD</sequence>